<comment type="function">
    <text evidence="1">Specifically methylates the N7 position of guanine in position 527 of 16S rRNA.</text>
</comment>
<comment type="catalytic activity">
    <reaction evidence="1">
        <text>guanosine(527) in 16S rRNA + S-adenosyl-L-methionine = N(7)-methylguanosine(527) in 16S rRNA + S-adenosyl-L-homocysteine</text>
        <dbReference type="Rhea" id="RHEA:42732"/>
        <dbReference type="Rhea" id="RHEA-COMP:10209"/>
        <dbReference type="Rhea" id="RHEA-COMP:10210"/>
        <dbReference type="ChEBI" id="CHEBI:57856"/>
        <dbReference type="ChEBI" id="CHEBI:59789"/>
        <dbReference type="ChEBI" id="CHEBI:74269"/>
        <dbReference type="ChEBI" id="CHEBI:74480"/>
        <dbReference type="EC" id="2.1.1.170"/>
    </reaction>
</comment>
<comment type="subcellular location">
    <subcellularLocation>
        <location evidence="1">Cytoplasm</location>
    </subcellularLocation>
</comment>
<comment type="similarity">
    <text evidence="1">Belongs to the methyltransferase superfamily. RNA methyltransferase RsmG family.</text>
</comment>
<reference key="1">
    <citation type="journal article" date="2005" name="Nucleic Acids Res.">
        <title>Genome dynamics and diversity of Shigella species, the etiologic agents of bacillary dysentery.</title>
        <authorList>
            <person name="Yang F."/>
            <person name="Yang J."/>
            <person name="Zhang X."/>
            <person name="Chen L."/>
            <person name="Jiang Y."/>
            <person name="Yan Y."/>
            <person name="Tang X."/>
            <person name="Wang J."/>
            <person name="Xiong Z."/>
            <person name="Dong J."/>
            <person name="Xue Y."/>
            <person name="Zhu Y."/>
            <person name="Xu X."/>
            <person name="Sun L."/>
            <person name="Chen S."/>
            <person name="Nie H."/>
            <person name="Peng J."/>
            <person name="Xu J."/>
            <person name="Wang Y."/>
            <person name="Yuan Z."/>
            <person name="Wen Y."/>
            <person name="Yao Z."/>
            <person name="Shen Y."/>
            <person name="Qiang B."/>
            <person name="Hou Y."/>
            <person name="Yu J."/>
            <person name="Jin Q."/>
        </authorList>
    </citation>
    <scope>NUCLEOTIDE SEQUENCE [LARGE SCALE GENOMIC DNA]</scope>
    <source>
        <strain>Ss046</strain>
    </source>
</reference>
<protein>
    <recommendedName>
        <fullName evidence="1">Ribosomal RNA small subunit methyltransferase G</fullName>
        <ecNumber evidence="1">2.1.1.170</ecNumber>
    </recommendedName>
    <alternativeName>
        <fullName evidence="1">16S rRNA 7-methylguanosine methyltransferase</fullName>
        <shortName evidence="1">16S rRNA m7G methyltransferase</shortName>
    </alternativeName>
</protein>
<name>RSMG_SHISS</name>
<sequence>MLNKLSLLLKDAGISLTDHQKNQLIAYVNMLHKWNKAYNLTSVRDPNEMLVRHILDSIVVAPYLQGERFIDVGTGPGLPGIPLSIVRPEAHFTLLDSLGKRVRFLRQVQHELKLENIEPVQSRVEEFPSEPPFDGVISRAFASLNDMVSWCHHLPGEQGRFYALKGQMPEDEIALLPEEYQVESVVKLQVPALDGERHLVVIKANKI</sequence>
<keyword id="KW-0963">Cytoplasm</keyword>
<keyword id="KW-0489">Methyltransferase</keyword>
<keyword id="KW-1185">Reference proteome</keyword>
<keyword id="KW-0698">rRNA processing</keyword>
<keyword id="KW-0949">S-adenosyl-L-methionine</keyword>
<keyword id="KW-0808">Transferase</keyword>
<accession>Q3YVP4</accession>
<dbReference type="EC" id="2.1.1.170" evidence="1"/>
<dbReference type="EMBL" id="CP000038">
    <property type="protein sequence ID" value="AAZ90418.1"/>
    <property type="molecule type" value="Genomic_DNA"/>
</dbReference>
<dbReference type="RefSeq" id="WP_000932839.1">
    <property type="nucleotide sequence ID" value="NC_007384.1"/>
</dbReference>
<dbReference type="SMR" id="Q3YVP4"/>
<dbReference type="GeneID" id="93778227"/>
<dbReference type="KEGG" id="ssn:SSON_3879"/>
<dbReference type="HOGENOM" id="CLU_065341_2_2_6"/>
<dbReference type="Proteomes" id="UP000002529">
    <property type="component" value="Chromosome"/>
</dbReference>
<dbReference type="GO" id="GO:0005829">
    <property type="term" value="C:cytosol"/>
    <property type="evidence" value="ECO:0007669"/>
    <property type="project" value="TreeGrafter"/>
</dbReference>
<dbReference type="GO" id="GO:0070043">
    <property type="term" value="F:rRNA (guanine-N7-)-methyltransferase activity"/>
    <property type="evidence" value="ECO:0007669"/>
    <property type="project" value="UniProtKB-UniRule"/>
</dbReference>
<dbReference type="CDD" id="cd02440">
    <property type="entry name" value="AdoMet_MTases"/>
    <property type="match status" value="1"/>
</dbReference>
<dbReference type="FunFam" id="3.40.50.150:FF:000032">
    <property type="entry name" value="Ribosomal RNA small subunit methyltransferase G"/>
    <property type="match status" value="1"/>
</dbReference>
<dbReference type="Gene3D" id="3.40.50.150">
    <property type="entry name" value="Vaccinia Virus protein VP39"/>
    <property type="match status" value="1"/>
</dbReference>
<dbReference type="HAMAP" id="MF_00074">
    <property type="entry name" value="16SrRNA_methyltr_G"/>
    <property type="match status" value="1"/>
</dbReference>
<dbReference type="InterPro" id="IPR003682">
    <property type="entry name" value="rRNA_ssu_MeTfrase_G"/>
</dbReference>
<dbReference type="InterPro" id="IPR029063">
    <property type="entry name" value="SAM-dependent_MTases_sf"/>
</dbReference>
<dbReference type="NCBIfam" id="TIGR00138">
    <property type="entry name" value="rsmG_gidB"/>
    <property type="match status" value="1"/>
</dbReference>
<dbReference type="PANTHER" id="PTHR31760">
    <property type="entry name" value="S-ADENOSYL-L-METHIONINE-DEPENDENT METHYLTRANSFERASES SUPERFAMILY PROTEIN"/>
    <property type="match status" value="1"/>
</dbReference>
<dbReference type="PANTHER" id="PTHR31760:SF0">
    <property type="entry name" value="S-ADENOSYL-L-METHIONINE-DEPENDENT METHYLTRANSFERASES SUPERFAMILY PROTEIN"/>
    <property type="match status" value="1"/>
</dbReference>
<dbReference type="Pfam" id="PF02527">
    <property type="entry name" value="GidB"/>
    <property type="match status" value="1"/>
</dbReference>
<dbReference type="PIRSF" id="PIRSF003078">
    <property type="entry name" value="GidB"/>
    <property type="match status" value="1"/>
</dbReference>
<dbReference type="SUPFAM" id="SSF53335">
    <property type="entry name" value="S-adenosyl-L-methionine-dependent methyltransferases"/>
    <property type="match status" value="1"/>
</dbReference>
<gene>
    <name evidence="1" type="primary">rsmG</name>
    <name type="ordered locus">SSON_3879</name>
</gene>
<organism>
    <name type="scientific">Shigella sonnei (strain Ss046)</name>
    <dbReference type="NCBI Taxonomy" id="300269"/>
    <lineage>
        <taxon>Bacteria</taxon>
        <taxon>Pseudomonadati</taxon>
        <taxon>Pseudomonadota</taxon>
        <taxon>Gammaproteobacteria</taxon>
        <taxon>Enterobacterales</taxon>
        <taxon>Enterobacteriaceae</taxon>
        <taxon>Shigella</taxon>
    </lineage>
</organism>
<evidence type="ECO:0000255" key="1">
    <source>
        <dbReference type="HAMAP-Rule" id="MF_00074"/>
    </source>
</evidence>
<proteinExistence type="inferred from homology"/>
<feature type="chain" id="PRO_1000010210" description="Ribosomal RNA small subunit methyltransferase G">
    <location>
        <begin position="1"/>
        <end position="207"/>
    </location>
</feature>
<feature type="binding site" evidence="1">
    <location>
        <position position="73"/>
    </location>
    <ligand>
        <name>S-adenosyl-L-methionine</name>
        <dbReference type="ChEBI" id="CHEBI:59789"/>
    </ligand>
</feature>
<feature type="binding site" evidence="1">
    <location>
        <position position="78"/>
    </location>
    <ligand>
        <name>S-adenosyl-L-methionine</name>
        <dbReference type="ChEBI" id="CHEBI:59789"/>
    </ligand>
</feature>
<feature type="binding site" evidence="1">
    <location>
        <begin position="124"/>
        <end position="125"/>
    </location>
    <ligand>
        <name>S-adenosyl-L-methionine</name>
        <dbReference type="ChEBI" id="CHEBI:59789"/>
    </ligand>
</feature>
<feature type="binding site" evidence="1">
    <location>
        <position position="139"/>
    </location>
    <ligand>
        <name>S-adenosyl-L-methionine</name>
        <dbReference type="ChEBI" id="CHEBI:59789"/>
    </ligand>
</feature>